<keyword id="KW-0002">3D-structure</keyword>
<keyword id="KW-0025">Alternative splicing</keyword>
<keyword id="KW-0137">Centromere</keyword>
<keyword id="KW-0158">Chromosome</keyword>
<keyword id="KW-0963">Cytoplasm</keyword>
<keyword id="KW-0995">Kinetochore</keyword>
<keyword id="KW-0539">Nucleus</keyword>
<keyword id="KW-1267">Proteomics identification</keyword>
<keyword id="KW-1185">Reference proteome</keyword>
<dbReference type="EMBL" id="EU035297">
    <property type="protein sequence ID" value="ABS84666.1"/>
    <property type="molecule type" value="mRNA"/>
</dbReference>
<dbReference type="EMBL" id="AL160131">
    <property type="protein sequence ID" value="CAB77147.1"/>
    <property type="molecule type" value="mRNA"/>
</dbReference>
<dbReference type="EMBL" id="AK123479">
    <property type="protein sequence ID" value="BAC85624.1"/>
    <property type="molecule type" value="mRNA"/>
</dbReference>
<dbReference type="EMBL" id="CR456399">
    <property type="protein sequence ID" value="CAG30285.1"/>
    <property type="molecule type" value="mRNA"/>
</dbReference>
<dbReference type="EMBL" id="CR457392">
    <property type="protein sequence ID" value="CAG33673.1"/>
    <property type="molecule type" value="mRNA"/>
</dbReference>
<dbReference type="EMBL" id="Z99716">
    <property type="status" value="NOT_ANNOTATED_CDS"/>
    <property type="molecule type" value="Genomic_DNA"/>
</dbReference>
<dbReference type="EMBL" id="BC000705">
    <property type="protein sequence ID" value="AAH00705.1"/>
    <property type="molecule type" value="mRNA"/>
</dbReference>
<dbReference type="EMBL" id="BC007495">
    <property type="protein sequence ID" value="AAH07495.1"/>
    <property type="molecule type" value="mRNA"/>
</dbReference>
<dbReference type="EMBL" id="BU194618">
    <property type="status" value="NOT_ANNOTATED_CDS"/>
    <property type="molecule type" value="mRNA"/>
</dbReference>
<dbReference type="CCDS" id="CCDS14025.1">
    <molecule id="Q9NSP4-1"/>
</dbReference>
<dbReference type="CCDS" id="CCDS46719.1">
    <molecule id="Q9NSP4-3"/>
</dbReference>
<dbReference type="CCDS" id="CCDS46720.1">
    <molecule id="Q9NSP4-4"/>
</dbReference>
<dbReference type="RefSeq" id="NP_001002876.1">
    <molecule id="Q9NSP4-4"/>
    <property type="nucleotide sequence ID" value="NM_001002876.3"/>
</dbReference>
<dbReference type="RefSeq" id="NP_001103685.1">
    <molecule id="Q9NSP4-3"/>
    <property type="nucleotide sequence ID" value="NM_001110215.3"/>
</dbReference>
<dbReference type="RefSeq" id="NP_001291299.1">
    <property type="nucleotide sequence ID" value="NM_001304370.1"/>
</dbReference>
<dbReference type="RefSeq" id="NP_001291300.1">
    <molecule id="Q9NSP4-2"/>
    <property type="nucleotide sequence ID" value="NM_001304371.2"/>
</dbReference>
<dbReference type="RefSeq" id="NP_001291301.1">
    <property type="nucleotide sequence ID" value="NM_001304372.1"/>
</dbReference>
<dbReference type="RefSeq" id="NP_001291302.1">
    <property type="nucleotide sequence ID" value="NM_001304373.1"/>
</dbReference>
<dbReference type="RefSeq" id="NP_076958.1">
    <molecule id="Q9NSP4-1"/>
    <property type="nucleotide sequence ID" value="NM_024053.5"/>
</dbReference>
<dbReference type="PDB" id="4P0T">
    <property type="method" value="X-ray"/>
    <property type="resolution" value="1.49 A"/>
    <property type="chains" value="A/B=1-171"/>
</dbReference>
<dbReference type="PDB" id="4WAU">
    <property type="method" value="X-ray"/>
    <property type="resolution" value="2.20 A"/>
    <property type="chains" value="A/B=1-171"/>
</dbReference>
<dbReference type="PDB" id="7PKN">
    <property type="method" value="EM"/>
    <property type="resolution" value="3.20 A"/>
    <property type="chains" value="M=1-180"/>
</dbReference>
<dbReference type="PDB" id="7QOO">
    <property type="method" value="EM"/>
    <property type="resolution" value="4.60 A"/>
    <property type="chains" value="M=1-180"/>
</dbReference>
<dbReference type="PDB" id="7R5S">
    <property type="method" value="EM"/>
    <property type="resolution" value="2.83 A"/>
    <property type="chains" value="M=1-180"/>
</dbReference>
<dbReference type="PDB" id="7R5V">
    <property type="method" value="EM"/>
    <property type="resolution" value="4.55 A"/>
    <property type="chains" value="M=1-180"/>
</dbReference>
<dbReference type="PDB" id="7XHN">
    <property type="method" value="EM"/>
    <property type="resolution" value="3.71 A"/>
    <property type="chains" value="M=1-180"/>
</dbReference>
<dbReference type="PDB" id="7XHO">
    <property type="method" value="EM"/>
    <property type="resolution" value="3.29 A"/>
    <property type="chains" value="M=1-180"/>
</dbReference>
<dbReference type="PDB" id="7YWX">
    <property type="method" value="EM"/>
    <property type="resolution" value="12.00 A"/>
    <property type="chains" value="M=1-180"/>
</dbReference>
<dbReference type="PDB" id="7YYH">
    <property type="method" value="EM"/>
    <property type="resolution" value="8.90 A"/>
    <property type="chains" value="M=1-180"/>
</dbReference>
<dbReference type="PDBsum" id="4P0T"/>
<dbReference type="PDBsum" id="4WAU"/>
<dbReference type="PDBsum" id="7PKN"/>
<dbReference type="PDBsum" id="7QOO"/>
<dbReference type="PDBsum" id="7R5S"/>
<dbReference type="PDBsum" id="7R5V"/>
<dbReference type="PDBsum" id="7XHN"/>
<dbReference type="PDBsum" id="7XHO"/>
<dbReference type="PDBsum" id="7YWX"/>
<dbReference type="PDBsum" id="7YYH"/>
<dbReference type="EMDB" id="EMD-13473"/>
<dbReference type="EMDB" id="EMD-14098"/>
<dbReference type="EMDB" id="EMD-14336"/>
<dbReference type="EMDB" id="EMD-14341"/>
<dbReference type="EMDB" id="EMD-14351"/>
<dbReference type="EMDB" id="EMD-14375"/>
<dbReference type="EMDB" id="EMD-33196"/>
<dbReference type="EMDB" id="EMD-33197"/>
<dbReference type="SMR" id="Q9NSP4"/>
<dbReference type="BioGRID" id="122488">
    <property type="interactions" value="145"/>
</dbReference>
<dbReference type="ComplexPortal" id="CPX-5646">
    <property type="entry name" value="Kinetochore CCAN complex"/>
</dbReference>
<dbReference type="CORUM" id="Q9NSP4"/>
<dbReference type="FunCoup" id="Q9NSP4">
    <property type="interactions" value="1327"/>
</dbReference>
<dbReference type="IntAct" id="Q9NSP4">
    <property type="interactions" value="94"/>
</dbReference>
<dbReference type="MINT" id="Q9NSP4"/>
<dbReference type="STRING" id="9606.ENSP00000215980"/>
<dbReference type="GlyCosmos" id="Q9NSP4">
    <property type="glycosylation" value="2 sites, 1 glycan"/>
</dbReference>
<dbReference type="GlyGen" id="Q9NSP4">
    <property type="glycosylation" value="2 sites, 1 O-linked glycan (2 sites)"/>
</dbReference>
<dbReference type="iPTMnet" id="Q9NSP4"/>
<dbReference type="PhosphoSitePlus" id="Q9NSP4"/>
<dbReference type="BioMuta" id="CENPM"/>
<dbReference type="DMDM" id="47117330"/>
<dbReference type="jPOST" id="Q9NSP4"/>
<dbReference type="MassIVE" id="Q9NSP4"/>
<dbReference type="PaxDb" id="9606-ENSP00000215980"/>
<dbReference type="PeptideAtlas" id="Q9NSP4"/>
<dbReference type="ProteomicsDB" id="2973"/>
<dbReference type="ProteomicsDB" id="82572">
    <molecule id="Q9NSP4-1"/>
</dbReference>
<dbReference type="ProteomicsDB" id="82573">
    <molecule id="Q9NSP4-2"/>
</dbReference>
<dbReference type="ProteomicsDB" id="82574">
    <molecule id="Q9NSP4-3"/>
</dbReference>
<dbReference type="Pumba" id="Q9NSP4"/>
<dbReference type="Antibodypedia" id="27112">
    <property type="antibodies" value="137 antibodies from 25 providers"/>
</dbReference>
<dbReference type="DNASU" id="79019"/>
<dbReference type="Ensembl" id="ENST00000215980.10">
    <molecule id="Q9NSP4-1"/>
    <property type="protein sequence ID" value="ENSP00000215980.5"/>
    <property type="gene ID" value="ENSG00000100162.16"/>
</dbReference>
<dbReference type="Ensembl" id="ENST00000407253.7">
    <molecule id="Q9NSP4-4"/>
    <property type="protein sequence ID" value="ENSP00000384743.3"/>
    <property type="gene ID" value="ENSG00000100162.16"/>
</dbReference>
<dbReference type="Ensembl" id="ENST00000472374.6">
    <molecule id="Q9NSP4-3"/>
    <property type="protein sequence ID" value="ENSP00000430624.1"/>
    <property type="gene ID" value="ENSG00000100162.16"/>
</dbReference>
<dbReference type="GeneID" id="79019"/>
<dbReference type="KEGG" id="hsa:79019"/>
<dbReference type="MANE-Select" id="ENST00000215980.10">
    <property type="protein sequence ID" value="ENSP00000215980.5"/>
    <property type="RefSeq nucleotide sequence ID" value="NM_024053.5"/>
    <property type="RefSeq protein sequence ID" value="NP_076958.1"/>
</dbReference>
<dbReference type="UCSC" id="uc003bbn.4">
    <molecule id="Q9NSP4-1"/>
    <property type="organism name" value="human"/>
</dbReference>
<dbReference type="AGR" id="HGNC:18352"/>
<dbReference type="CTD" id="79019"/>
<dbReference type="DisGeNET" id="79019"/>
<dbReference type="GeneCards" id="CENPM"/>
<dbReference type="HGNC" id="HGNC:18352">
    <property type="gene designation" value="CENPM"/>
</dbReference>
<dbReference type="HPA" id="ENSG00000100162">
    <property type="expression patterns" value="Tissue enhanced (bone marrow, lymphoid tissue)"/>
</dbReference>
<dbReference type="MIM" id="610152">
    <property type="type" value="gene"/>
</dbReference>
<dbReference type="neXtProt" id="NX_Q9NSP4"/>
<dbReference type="OpenTargets" id="ENSG00000100162"/>
<dbReference type="PharmGKB" id="PA25885"/>
<dbReference type="VEuPathDB" id="HostDB:ENSG00000100162"/>
<dbReference type="eggNOG" id="ENOG502S17M">
    <property type="taxonomic scope" value="Eukaryota"/>
</dbReference>
<dbReference type="GeneTree" id="ENSGT00390000017504"/>
<dbReference type="HOGENOM" id="CLU_127179_0_0_1"/>
<dbReference type="InParanoid" id="Q9NSP4"/>
<dbReference type="OMA" id="CTLPLDI"/>
<dbReference type="OrthoDB" id="2386686at2759"/>
<dbReference type="PAN-GO" id="Q9NSP4">
    <property type="GO annotations" value="0 GO annotations based on evolutionary models"/>
</dbReference>
<dbReference type="PhylomeDB" id="Q9NSP4"/>
<dbReference type="TreeFam" id="TF328778"/>
<dbReference type="PathwayCommons" id="Q9NSP4"/>
<dbReference type="Reactome" id="R-HSA-141444">
    <property type="pathway name" value="Amplification of signal from unattached kinetochores via a MAD2 inhibitory signal"/>
</dbReference>
<dbReference type="Reactome" id="R-HSA-2467813">
    <property type="pathway name" value="Separation of Sister Chromatids"/>
</dbReference>
<dbReference type="Reactome" id="R-HSA-2500257">
    <property type="pathway name" value="Resolution of Sister Chromatid Cohesion"/>
</dbReference>
<dbReference type="Reactome" id="R-HSA-5663220">
    <property type="pathway name" value="RHO GTPases Activate Formins"/>
</dbReference>
<dbReference type="Reactome" id="R-HSA-606279">
    <property type="pathway name" value="Deposition of new CENPA-containing nucleosomes at the centromere"/>
</dbReference>
<dbReference type="Reactome" id="R-HSA-68877">
    <property type="pathway name" value="Mitotic Prometaphase"/>
</dbReference>
<dbReference type="Reactome" id="R-HSA-9648025">
    <property type="pathway name" value="EML4 and NUDC in mitotic spindle formation"/>
</dbReference>
<dbReference type="SignaLink" id="Q9NSP4"/>
<dbReference type="SIGNOR" id="Q9NSP4"/>
<dbReference type="BioGRID-ORCS" id="79019">
    <property type="hits" value="491 hits in 1157 CRISPR screens"/>
</dbReference>
<dbReference type="ChiTaRS" id="CENPM">
    <property type="organism name" value="human"/>
</dbReference>
<dbReference type="EvolutionaryTrace" id="Q9NSP4"/>
<dbReference type="GeneWiki" id="CENPM"/>
<dbReference type="GenomeRNAi" id="79019"/>
<dbReference type="Pharos" id="Q9NSP4">
    <property type="development level" value="Tbio"/>
</dbReference>
<dbReference type="PRO" id="PR:Q9NSP4"/>
<dbReference type="Proteomes" id="UP000005640">
    <property type="component" value="Chromosome 22"/>
</dbReference>
<dbReference type="RNAct" id="Q9NSP4">
    <property type="molecule type" value="protein"/>
</dbReference>
<dbReference type="Bgee" id="ENSG00000100162">
    <property type="expression patterns" value="Expressed in mucosa of transverse colon and 111 other cell types or tissues"/>
</dbReference>
<dbReference type="ExpressionAtlas" id="Q9NSP4">
    <property type="expression patterns" value="baseline and differential"/>
</dbReference>
<dbReference type="GO" id="GO:0005829">
    <property type="term" value="C:cytosol"/>
    <property type="evidence" value="ECO:0000304"/>
    <property type="project" value="Reactome"/>
</dbReference>
<dbReference type="GO" id="GO:0000939">
    <property type="term" value="C:inner kinetochore"/>
    <property type="evidence" value="ECO:0000353"/>
    <property type="project" value="ComplexPortal"/>
</dbReference>
<dbReference type="GO" id="GO:0005654">
    <property type="term" value="C:nucleoplasm"/>
    <property type="evidence" value="ECO:0000304"/>
    <property type="project" value="Reactome"/>
</dbReference>
<dbReference type="GO" id="GO:0005634">
    <property type="term" value="C:nucleus"/>
    <property type="evidence" value="ECO:0000303"/>
    <property type="project" value="ComplexPortal"/>
</dbReference>
<dbReference type="GO" id="GO:0007059">
    <property type="term" value="P:chromosome segregation"/>
    <property type="evidence" value="ECO:0000303"/>
    <property type="project" value="ComplexPortal"/>
</dbReference>
<dbReference type="FunFam" id="3.40.50.300:FF:001481">
    <property type="entry name" value="Centromere protein M"/>
    <property type="match status" value="1"/>
</dbReference>
<dbReference type="Gene3D" id="3.40.50.300">
    <property type="entry name" value="P-loop containing nucleotide triphosphate hydrolases"/>
    <property type="match status" value="1"/>
</dbReference>
<dbReference type="InterPro" id="IPR020987">
    <property type="entry name" value="Centromere_Cenp-M"/>
</dbReference>
<dbReference type="InterPro" id="IPR027417">
    <property type="entry name" value="P-loop_NTPase"/>
</dbReference>
<dbReference type="PANTHER" id="PTHR34436">
    <property type="entry name" value="CENTROMERE PROTEIN M"/>
    <property type="match status" value="1"/>
</dbReference>
<dbReference type="PANTHER" id="PTHR34436:SF1">
    <property type="entry name" value="CENTROMERE PROTEIN M"/>
    <property type="match status" value="1"/>
</dbReference>
<dbReference type="Pfam" id="PF11111">
    <property type="entry name" value="CENP-M"/>
    <property type="match status" value="1"/>
</dbReference>
<proteinExistence type="evidence at protein level"/>
<feature type="chain" id="PRO_0000058224" description="Centromere protein M">
    <location>
        <begin position="1"/>
        <end position="180"/>
    </location>
</feature>
<feature type="splice variant" id="VSP_017726" description="In isoform 3." evidence="6">
    <location>
        <begin position="1"/>
        <end position="122"/>
    </location>
</feature>
<feature type="splice variant" id="VSP_046189" description="In isoform 4." evidence="5">
    <original>AGRESHCSIHRHTVVKLAHTYQSPLLYCDLEVEGFRATMAQRLVRVLQICAGHVPGVSALNLLSLLRSSEGPSLED</original>
    <variation>GGR</variation>
    <location>
        <begin position="104"/>
        <end position="179"/>
    </location>
</feature>
<feature type="splice variant" id="VSP_010259" description="In isoform 2." evidence="4">
    <original>AGRESHCSIHRHTVVKLAHTYQSPLLYCD</original>
    <variation>GKYVPRLLLPTPSQGKAGAAVGFLLRHPG</variation>
    <location>
        <begin position="104"/>
        <end position="132"/>
    </location>
</feature>
<feature type="splice variant" id="VSP_017725" description="In isoform 3." evidence="6">
    <original>TYQSPLLYCDLE</original>
    <variation>MGRVWDLPGVLK</variation>
    <location>
        <begin position="123"/>
        <end position="134"/>
    </location>
</feature>
<feature type="splice variant" id="VSP_010260" description="In isoform 2." evidence="4">
    <location>
        <begin position="133"/>
        <end position="180"/>
    </location>
</feature>
<feature type="strand" evidence="10">
    <location>
        <begin position="13"/>
        <end position="15"/>
    </location>
</feature>
<feature type="strand" evidence="8">
    <location>
        <begin position="16"/>
        <end position="21"/>
    </location>
</feature>
<feature type="helix" evidence="8">
    <location>
        <begin position="25"/>
        <end position="36"/>
    </location>
</feature>
<feature type="strand" evidence="10">
    <location>
        <begin position="41"/>
        <end position="43"/>
    </location>
</feature>
<feature type="strand" evidence="8">
    <location>
        <begin position="44"/>
        <end position="53"/>
    </location>
</feature>
<feature type="strand" evidence="8">
    <location>
        <begin position="65"/>
        <end position="71"/>
    </location>
</feature>
<feature type="helix" evidence="8">
    <location>
        <begin position="75"/>
        <end position="85"/>
    </location>
</feature>
<feature type="helix" evidence="8">
    <location>
        <begin position="90"/>
        <end position="93"/>
    </location>
</feature>
<feature type="strand" evidence="8">
    <location>
        <begin position="97"/>
        <end position="103"/>
    </location>
</feature>
<feature type="helix" evidence="9">
    <location>
        <begin position="107"/>
        <end position="109"/>
    </location>
</feature>
<feature type="helix" evidence="8">
    <location>
        <begin position="111"/>
        <end position="123"/>
    </location>
</feature>
<feature type="strand" evidence="8">
    <location>
        <begin position="128"/>
        <end position="130"/>
    </location>
</feature>
<feature type="helix" evidence="8">
    <location>
        <begin position="136"/>
        <end position="153"/>
    </location>
</feature>
<feature type="helix" evidence="8">
    <location>
        <begin position="162"/>
        <end position="165"/>
    </location>
</feature>
<gene>
    <name type="primary">CENPM</name>
    <name type="synonym">C22orf18</name>
    <name type="synonym">ICEN39</name>
    <name type="synonym">PANE1</name>
</gene>
<accession>Q9NSP4</accession>
<accession>A7LM22</accession>
<accession>B1AHQ9</accession>
<accession>Q6I9W3</accession>
<sequence length="180" mass="19737">MSVLRPLDKLPGLNTATILLVGTEDALLQQLADSMLKEDCASELKVHLAKSLPLPSSVNRPRIDLIVFVVNLHSKYSLQNTEESLRHVDASFFLGKVCFLATGAGRESHCSIHRHTVVKLAHTYQSPLLYCDLEVEGFRATMAQRLVRVLQICAGHVPGVSALNLLSLLRSSEGPSLEDL</sequence>
<name>CENPM_HUMAN</name>
<evidence type="ECO:0000250" key="1"/>
<evidence type="ECO:0000269" key="2">
    <source>
    </source>
</evidence>
<evidence type="ECO:0000269" key="3">
    <source>
    </source>
</evidence>
<evidence type="ECO:0000303" key="4">
    <source>
    </source>
</evidence>
<evidence type="ECO:0000303" key="5">
    <source>
    </source>
</evidence>
<evidence type="ECO:0000303" key="6">
    <source>
    </source>
</evidence>
<evidence type="ECO:0000305" key="7"/>
<evidence type="ECO:0007829" key="8">
    <source>
        <dbReference type="PDB" id="4P0T"/>
    </source>
</evidence>
<evidence type="ECO:0007829" key="9">
    <source>
        <dbReference type="PDB" id="7R5S"/>
    </source>
</evidence>
<evidence type="ECO:0007829" key="10">
    <source>
        <dbReference type="PDB" id="7XHO"/>
    </source>
</evidence>
<comment type="function">
    <text evidence="3">Component of the CENPA-NAC (nucleosome-associated) complex, a complex that plays a central role in assembly of kinetochore proteins, mitotic progression and chromosome segregation. The CENPA-NAC complex recruits the CENPA-CAD (nucleosome distal) complex and may be involved in incorporation of newly synthesized CENPA into centromeres.</text>
</comment>
<comment type="subunit">
    <text evidence="2">Component of the CENPA-NAC complex, at least composed of CENPA, CENPC, CENPH, CENPM, CENPN, CENPT and CENPU. The CENPA-NAC complex interacts with the CENPA-CAD complex, composed of CENPI, CENPK, CENPL, CENPO, CENPP, CENPQ, CENPR and CENPS.</text>
</comment>
<comment type="subcellular location">
    <subcellularLocation>
        <location>Nucleus</location>
    </subcellularLocation>
    <subcellularLocation>
        <location>Cytoplasm</location>
    </subcellularLocation>
    <subcellularLocation>
        <location>Chromosome</location>
        <location>Centromere</location>
        <location>Kinetochore</location>
    </subcellularLocation>
    <text evidence="1">Nuclear in non-confluent cells and cytoplasmic in confluent or dividing cells (By similarity). Localizes in the kinetochore domain of centromeres.</text>
</comment>
<comment type="alternative products">
    <event type="alternative splicing"/>
    <isoform>
        <id>Q9NSP4-1</id>
        <name>1</name>
        <sequence type="displayed"/>
    </isoform>
    <isoform>
        <id>Q9NSP4-2</id>
        <name>2</name>
        <sequence type="described" ref="VSP_010259 VSP_010260"/>
    </isoform>
    <isoform>
        <id>Q9NSP4-3</id>
        <name>3</name>
        <sequence type="described" ref="VSP_017726 VSP_017725"/>
    </isoform>
    <isoform>
        <id>Q9NSP4-4</id>
        <name>4</name>
        <sequence type="described" ref="VSP_046189"/>
    </isoform>
</comment>
<comment type="tissue specificity">
    <text>Isoform 3 is highly expressed in spleen, and intermediately in heart, prostate and ovary. Isoform 3 is highly expressed in resting CD19 B-cells and B-lineage chronic lymphocytic leukemia (B-CLL) cells and weakly expressed in activated B-cells. Isoform 1 is selectively expressed in activated CD19 cells and weakly in resting CD19 B-cells.</text>
</comment>
<comment type="miscellaneous">
    <molecule>Isoform 2</molecule>
    <text evidence="7">Due to intron retention.</text>
</comment>
<protein>
    <recommendedName>
        <fullName>Centromere protein M</fullName>
        <shortName>CENP-M</shortName>
    </recommendedName>
    <alternativeName>
        <fullName>Interphase centromere complex protein 39</fullName>
    </alternativeName>
    <alternativeName>
        <fullName>Proliferation-associated nuclear element protein 1</fullName>
    </alternativeName>
</protein>
<organism>
    <name type="scientific">Homo sapiens</name>
    <name type="common">Human</name>
    <dbReference type="NCBI Taxonomy" id="9606"/>
    <lineage>
        <taxon>Eukaryota</taxon>
        <taxon>Metazoa</taxon>
        <taxon>Chordata</taxon>
        <taxon>Craniata</taxon>
        <taxon>Vertebrata</taxon>
        <taxon>Euteleostomi</taxon>
        <taxon>Mammalia</taxon>
        <taxon>Eutheria</taxon>
        <taxon>Euarchontoglires</taxon>
        <taxon>Primates</taxon>
        <taxon>Haplorrhini</taxon>
        <taxon>Catarrhini</taxon>
        <taxon>Hominidae</taxon>
        <taxon>Homo</taxon>
    </lineage>
</organism>
<reference key="1">
    <citation type="journal article" date="2006" name="Blood">
        <title>The PANE1 gene encodes a novel human minor histocompatibility antigen that is selectively expressed in B-lymphoid cells and B-CLL.</title>
        <authorList>
            <person name="Brickner A.G."/>
            <person name="Evans A.M."/>
            <person name="Mito J.K."/>
            <person name="Xuereb S.M."/>
            <person name="Feng X."/>
            <person name="Nishida T."/>
            <person name="Fairfull L."/>
            <person name="Ferrell R.E."/>
            <person name="Foon K.A."/>
            <person name="Hunt D.F."/>
            <person name="Shabanowitz J."/>
            <person name="Engelhard V.H."/>
            <person name="Riddell S.R."/>
            <person name="Warren E.H."/>
        </authorList>
    </citation>
    <scope>NUCLEOTIDE SEQUENCE [MRNA] (ISOFORM 3)</scope>
    <scope>IDENTIFICATION BY MASS SPECTROMETRY</scope>
</reference>
<reference key="2">
    <citation type="journal article" date="2003" name="Genome Res.">
        <title>Reevaluating human gene annotation: a second-generation analysis of chromosome 22.</title>
        <authorList>
            <person name="Collins J.E."/>
            <person name="Goward M.E."/>
            <person name="Cole C.G."/>
            <person name="Smink L.J."/>
            <person name="Huckle E.J."/>
            <person name="Knowles S."/>
            <person name="Bye J.M."/>
            <person name="Beare D.M."/>
            <person name="Dunham I."/>
        </authorList>
    </citation>
    <scope>NUCLEOTIDE SEQUENCE [LARGE SCALE MRNA] (ISOFORM 1)</scope>
</reference>
<reference key="3">
    <citation type="journal article" date="2004" name="Nat. Genet.">
        <title>Complete sequencing and characterization of 21,243 full-length human cDNAs.</title>
        <authorList>
            <person name="Ota T."/>
            <person name="Suzuki Y."/>
            <person name="Nishikawa T."/>
            <person name="Otsuki T."/>
            <person name="Sugiyama T."/>
            <person name="Irie R."/>
            <person name="Wakamatsu A."/>
            <person name="Hayashi K."/>
            <person name="Sato H."/>
            <person name="Nagai K."/>
            <person name="Kimura K."/>
            <person name="Makita H."/>
            <person name="Sekine M."/>
            <person name="Obayashi M."/>
            <person name="Nishi T."/>
            <person name="Shibahara T."/>
            <person name="Tanaka T."/>
            <person name="Ishii S."/>
            <person name="Yamamoto J."/>
            <person name="Saito K."/>
            <person name="Kawai Y."/>
            <person name="Isono Y."/>
            <person name="Nakamura Y."/>
            <person name="Nagahari K."/>
            <person name="Murakami K."/>
            <person name="Yasuda T."/>
            <person name="Iwayanagi T."/>
            <person name="Wagatsuma M."/>
            <person name="Shiratori A."/>
            <person name="Sudo H."/>
            <person name="Hosoiri T."/>
            <person name="Kaku Y."/>
            <person name="Kodaira H."/>
            <person name="Kondo H."/>
            <person name="Sugawara M."/>
            <person name="Takahashi M."/>
            <person name="Kanda K."/>
            <person name="Yokoi T."/>
            <person name="Furuya T."/>
            <person name="Kikkawa E."/>
            <person name="Omura Y."/>
            <person name="Abe K."/>
            <person name="Kamihara K."/>
            <person name="Katsuta N."/>
            <person name="Sato K."/>
            <person name="Tanikawa M."/>
            <person name="Yamazaki M."/>
            <person name="Ninomiya K."/>
            <person name="Ishibashi T."/>
            <person name="Yamashita H."/>
            <person name="Murakawa K."/>
            <person name="Fujimori K."/>
            <person name="Tanai H."/>
            <person name="Kimata M."/>
            <person name="Watanabe M."/>
            <person name="Hiraoka S."/>
            <person name="Chiba Y."/>
            <person name="Ishida S."/>
            <person name="Ono Y."/>
            <person name="Takiguchi S."/>
            <person name="Watanabe S."/>
            <person name="Yosida M."/>
            <person name="Hotuta T."/>
            <person name="Kusano J."/>
            <person name="Kanehori K."/>
            <person name="Takahashi-Fujii A."/>
            <person name="Hara H."/>
            <person name="Tanase T.-O."/>
            <person name="Nomura Y."/>
            <person name="Togiya S."/>
            <person name="Komai F."/>
            <person name="Hara R."/>
            <person name="Takeuchi K."/>
            <person name="Arita M."/>
            <person name="Imose N."/>
            <person name="Musashino K."/>
            <person name="Yuuki H."/>
            <person name="Oshima A."/>
            <person name="Sasaki N."/>
            <person name="Aotsuka S."/>
            <person name="Yoshikawa Y."/>
            <person name="Matsunawa H."/>
            <person name="Ichihara T."/>
            <person name="Shiohata N."/>
            <person name="Sano S."/>
            <person name="Moriya S."/>
            <person name="Momiyama H."/>
            <person name="Satoh N."/>
            <person name="Takami S."/>
            <person name="Terashima Y."/>
            <person name="Suzuki O."/>
            <person name="Nakagawa S."/>
            <person name="Senoh A."/>
            <person name="Mizoguchi H."/>
            <person name="Goto Y."/>
            <person name="Shimizu F."/>
            <person name="Wakebe H."/>
            <person name="Hishigaki H."/>
            <person name="Watanabe T."/>
            <person name="Sugiyama A."/>
            <person name="Takemoto M."/>
            <person name="Kawakami B."/>
            <person name="Yamazaki M."/>
            <person name="Watanabe K."/>
            <person name="Kumagai A."/>
            <person name="Itakura S."/>
            <person name="Fukuzumi Y."/>
            <person name="Fujimori Y."/>
            <person name="Komiyama M."/>
            <person name="Tashiro H."/>
            <person name="Tanigami A."/>
            <person name="Fujiwara T."/>
            <person name="Ono T."/>
            <person name="Yamada K."/>
            <person name="Fujii Y."/>
            <person name="Ozaki K."/>
            <person name="Hirao M."/>
            <person name="Ohmori Y."/>
            <person name="Kawabata A."/>
            <person name="Hikiji T."/>
            <person name="Kobatake N."/>
            <person name="Inagaki H."/>
            <person name="Ikema Y."/>
            <person name="Okamoto S."/>
            <person name="Okitani R."/>
            <person name="Kawakami T."/>
            <person name="Noguchi S."/>
            <person name="Itoh T."/>
            <person name="Shigeta K."/>
            <person name="Senba T."/>
            <person name="Matsumura K."/>
            <person name="Nakajima Y."/>
            <person name="Mizuno T."/>
            <person name="Morinaga M."/>
            <person name="Sasaki M."/>
            <person name="Togashi T."/>
            <person name="Oyama M."/>
            <person name="Hata H."/>
            <person name="Watanabe M."/>
            <person name="Komatsu T."/>
            <person name="Mizushima-Sugano J."/>
            <person name="Satoh T."/>
            <person name="Shirai Y."/>
            <person name="Takahashi Y."/>
            <person name="Nakagawa K."/>
            <person name="Okumura K."/>
            <person name="Nagase T."/>
            <person name="Nomura N."/>
            <person name="Kikuchi H."/>
            <person name="Masuho Y."/>
            <person name="Yamashita R."/>
            <person name="Nakai K."/>
            <person name="Yada T."/>
            <person name="Nakamura Y."/>
            <person name="Ohara O."/>
            <person name="Isogai T."/>
            <person name="Sugano S."/>
        </authorList>
    </citation>
    <scope>NUCLEOTIDE SEQUENCE [LARGE SCALE MRNA] (ISOFORM 2)</scope>
    <source>
        <tissue>Thalamus</tissue>
    </source>
</reference>
<reference key="4">
    <citation type="journal article" date="2004" name="Genome Biol.">
        <title>A genome annotation-driven approach to cloning the human ORFeome.</title>
        <authorList>
            <person name="Collins J.E."/>
            <person name="Wright C.L."/>
            <person name="Edwards C.A."/>
            <person name="Davis M.P."/>
            <person name="Grinham J.A."/>
            <person name="Cole C.G."/>
            <person name="Goward M.E."/>
            <person name="Aguado B."/>
            <person name="Mallya M."/>
            <person name="Mokrab Y."/>
            <person name="Huckle E.J."/>
            <person name="Beare D.M."/>
            <person name="Dunham I."/>
        </authorList>
    </citation>
    <scope>NUCLEOTIDE SEQUENCE [LARGE SCALE MRNA] (ISOFORM 1)</scope>
</reference>
<reference key="5">
    <citation type="submission" date="2004-06" db="EMBL/GenBank/DDBJ databases">
        <title>Cloning of human full open reading frames in Gateway(TM) system entry vector (pDONR201).</title>
        <authorList>
            <person name="Ebert L."/>
            <person name="Schick M."/>
            <person name="Neubert P."/>
            <person name="Schatten R."/>
            <person name="Henze S."/>
            <person name="Korn B."/>
        </authorList>
    </citation>
    <scope>NUCLEOTIDE SEQUENCE [LARGE SCALE MRNA]</scope>
</reference>
<reference key="6">
    <citation type="journal article" date="1999" name="Nature">
        <title>The DNA sequence of human chromosome 22.</title>
        <authorList>
            <person name="Dunham I."/>
            <person name="Hunt A.R."/>
            <person name="Collins J.E."/>
            <person name="Bruskiewich R."/>
            <person name="Beare D.M."/>
            <person name="Clamp M."/>
            <person name="Smink L.J."/>
            <person name="Ainscough R."/>
            <person name="Almeida J.P."/>
            <person name="Babbage A.K."/>
            <person name="Bagguley C."/>
            <person name="Bailey J."/>
            <person name="Barlow K.F."/>
            <person name="Bates K.N."/>
            <person name="Beasley O.P."/>
            <person name="Bird C.P."/>
            <person name="Blakey S.E."/>
            <person name="Bridgeman A.M."/>
            <person name="Buck D."/>
            <person name="Burgess J."/>
            <person name="Burrill W.D."/>
            <person name="Burton J."/>
            <person name="Carder C."/>
            <person name="Carter N.P."/>
            <person name="Chen Y."/>
            <person name="Clark G."/>
            <person name="Clegg S.M."/>
            <person name="Cobley V.E."/>
            <person name="Cole C.G."/>
            <person name="Collier R.E."/>
            <person name="Connor R."/>
            <person name="Conroy D."/>
            <person name="Corby N.R."/>
            <person name="Coville G.J."/>
            <person name="Cox A.V."/>
            <person name="Davis J."/>
            <person name="Dawson E."/>
            <person name="Dhami P.D."/>
            <person name="Dockree C."/>
            <person name="Dodsworth S.J."/>
            <person name="Durbin R.M."/>
            <person name="Ellington A.G."/>
            <person name="Evans K.L."/>
            <person name="Fey J.M."/>
            <person name="Fleming K."/>
            <person name="French L."/>
            <person name="Garner A.A."/>
            <person name="Gilbert J.G.R."/>
            <person name="Goward M.E."/>
            <person name="Grafham D.V."/>
            <person name="Griffiths M.N.D."/>
            <person name="Hall C."/>
            <person name="Hall R.E."/>
            <person name="Hall-Tamlyn G."/>
            <person name="Heathcott R.W."/>
            <person name="Ho S."/>
            <person name="Holmes S."/>
            <person name="Hunt S.E."/>
            <person name="Jones M.C."/>
            <person name="Kershaw J."/>
            <person name="Kimberley A.M."/>
            <person name="King A."/>
            <person name="Laird G.K."/>
            <person name="Langford C.F."/>
            <person name="Leversha M.A."/>
            <person name="Lloyd C."/>
            <person name="Lloyd D.M."/>
            <person name="Martyn I.D."/>
            <person name="Mashreghi-Mohammadi M."/>
            <person name="Matthews L.H."/>
            <person name="Mccann O.T."/>
            <person name="Mcclay J."/>
            <person name="Mclaren S."/>
            <person name="McMurray A.A."/>
            <person name="Milne S.A."/>
            <person name="Mortimore B.J."/>
            <person name="Odell C.N."/>
            <person name="Pavitt R."/>
            <person name="Pearce A.V."/>
            <person name="Pearson D."/>
            <person name="Phillimore B.J.C.T."/>
            <person name="Phillips S.H."/>
            <person name="Plumb R.W."/>
            <person name="Ramsay H."/>
            <person name="Ramsey Y."/>
            <person name="Rogers L."/>
            <person name="Ross M.T."/>
            <person name="Scott C.E."/>
            <person name="Sehra H.K."/>
            <person name="Skuce C.D."/>
            <person name="Smalley S."/>
            <person name="Smith M.L."/>
            <person name="Soderlund C."/>
            <person name="Spragon L."/>
            <person name="Steward C.A."/>
            <person name="Sulston J.E."/>
            <person name="Swann R.M."/>
            <person name="Vaudin M."/>
            <person name="Wall M."/>
            <person name="Wallis J.M."/>
            <person name="Whiteley M.N."/>
            <person name="Willey D.L."/>
            <person name="Williams L."/>
            <person name="Williams S.A."/>
            <person name="Williamson H."/>
            <person name="Wilmer T.E."/>
            <person name="Wilming L."/>
            <person name="Wright C.L."/>
            <person name="Hubbard T."/>
            <person name="Bentley D.R."/>
            <person name="Beck S."/>
            <person name="Rogers J."/>
            <person name="Shimizu N."/>
            <person name="Minoshima S."/>
            <person name="Kawasaki K."/>
            <person name="Sasaki T."/>
            <person name="Asakawa S."/>
            <person name="Kudoh J."/>
            <person name="Shintani A."/>
            <person name="Shibuya K."/>
            <person name="Yoshizaki Y."/>
            <person name="Aoki N."/>
            <person name="Mitsuyama S."/>
            <person name="Roe B.A."/>
            <person name="Chen F."/>
            <person name="Chu L."/>
            <person name="Crabtree J."/>
            <person name="Deschamps S."/>
            <person name="Do A."/>
            <person name="Do T."/>
            <person name="Dorman A."/>
            <person name="Fang F."/>
            <person name="Fu Y."/>
            <person name="Hu P."/>
            <person name="Hua A."/>
            <person name="Kenton S."/>
            <person name="Lai H."/>
            <person name="Lao H.I."/>
            <person name="Lewis J."/>
            <person name="Lewis S."/>
            <person name="Lin S.-P."/>
            <person name="Loh P."/>
            <person name="Malaj E."/>
            <person name="Nguyen T."/>
            <person name="Pan H."/>
            <person name="Phan S."/>
            <person name="Qi S."/>
            <person name="Qian Y."/>
            <person name="Ray L."/>
            <person name="Ren Q."/>
            <person name="Shaull S."/>
            <person name="Sloan D."/>
            <person name="Song L."/>
            <person name="Wang Q."/>
            <person name="Wang Y."/>
            <person name="Wang Z."/>
            <person name="White J."/>
            <person name="Willingham D."/>
            <person name="Wu H."/>
            <person name="Yao Z."/>
            <person name="Zhan M."/>
            <person name="Zhang G."/>
            <person name="Chissoe S."/>
            <person name="Murray J."/>
            <person name="Miller N."/>
            <person name="Minx P."/>
            <person name="Fulton R."/>
            <person name="Johnson D."/>
            <person name="Bemis G."/>
            <person name="Bentley D."/>
            <person name="Bradshaw H."/>
            <person name="Bourne S."/>
            <person name="Cordes M."/>
            <person name="Du Z."/>
            <person name="Fulton L."/>
            <person name="Goela D."/>
            <person name="Graves T."/>
            <person name="Hawkins J."/>
            <person name="Hinds K."/>
            <person name="Kemp K."/>
            <person name="Latreille P."/>
            <person name="Layman D."/>
            <person name="Ozersky P."/>
            <person name="Rohlfing T."/>
            <person name="Scheet P."/>
            <person name="Walker C."/>
            <person name="Wamsley A."/>
            <person name="Wohldmann P."/>
            <person name="Pepin K."/>
            <person name="Nelson J."/>
            <person name="Korf I."/>
            <person name="Bedell J.A."/>
            <person name="Hillier L.W."/>
            <person name="Mardis E."/>
            <person name="Waterston R."/>
            <person name="Wilson R."/>
            <person name="Emanuel B.S."/>
            <person name="Shaikh T."/>
            <person name="Kurahashi H."/>
            <person name="Saitta S."/>
            <person name="Budarf M.L."/>
            <person name="McDermid H.E."/>
            <person name="Johnson A."/>
            <person name="Wong A.C.C."/>
            <person name="Morrow B.E."/>
            <person name="Edelmann L."/>
            <person name="Kim U.J."/>
            <person name="Shizuya H."/>
            <person name="Simon M.I."/>
            <person name="Dumanski J.P."/>
            <person name="Peyrard M."/>
            <person name="Kedra D."/>
            <person name="Seroussi E."/>
            <person name="Fransson I."/>
            <person name="Tapia I."/>
            <person name="Bruder C.E."/>
            <person name="O'Brien K.P."/>
            <person name="Wilkinson P."/>
            <person name="Bodenteich A."/>
            <person name="Hartman K."/>
            <person name="Hu X."/>
            <person name="Khan A.S."/>
            <person name="Lane L."/>
            <person name="Tilahun Y."/>
            <person name="Wright H."/>
        </authorList>
    </citation>
    <scope>NUCLEOTIDE SEQUENCE [LARGE SCALE GENOMIC DNA]</scope>
</reference>
<reference key="7">
    <citation type="journal article" date="2004" name="Genome Res.">
        <title>The status, quality, and expansion of the NIH full-length cDNA project: the Mammalian Gene Collection (MGC).</title>
        <authorList>
            <consortium name="The MGC Project Team"/>
        </authorList>
    </citation>
    <scope>NUCLEOTIDE SEQUENCE [LARGE SCALE MRNA] (ISOFORMS 1 AND 4)</scope>
    <source>
        <tissue>Cervix</tissue>
        <tissue>Lymph</tissue>
        <tissue>Melanoma</tissue>
    </source>
</reference>
<reference key="8">
    <citation type="journal article" date="2004" name="Gene Expr. Patterns">
        <title>The proliferation associated nuclear element (PANE1) is conserved between mammals and fish and preferentially expressed in activated lymphoid cells.</title>
        <authorList>
            <person name="Bierie B."/>
            <person name="Edwin M."/>
            <person name="Melenhorst J.J."/>
            <person name="Hennighausen L."/>
        </authorList>
    </citation>
    <scope>SUBCELLULAR LOCATION</scope>
</reference>
<reference key="9">
    <citation type="journal article" date="2006" name="Genes Cells">
        <title>Comprehensive analysis of the ICEN (Interphase Centromere Complex) components enriched in the CENP-A chromatin of human cells.</title>
        <authorList>
            <person name="Izuta H."/>
            <person name="Ikeno M."/>
            <person name="Suzuki N."/>
            <person name="Tomonaga T."/>
            <person name="Nozaki N."/>
            <person name="Obuse C."/>
            <person name="Kisu Y."/>
            <person name="Goshima N."/>
            <person name="Nomura F."/>
            <person name="Nomura N."/>
            <person name="Yoda K."/>
        </authorList>
    </citation>
    <scope>FUNCTION</scope>
    <scope>SUBCELLULAR LOCATION</scope>
</reference>
<reference key="10">
    <citation type="journal article" date="2006" name="Nat. Cell Biol.">
        <title>The human CENP-A centromeric nucleosome-associated complex.</title>
        <authorList>
            <person name="Foltz D.R."/>
            <person name="Jansen L.E.T."/>
            <person name="Black B.E."/>
            <person name="Bailey A.O."/>
            <person name="Yates J.R. III"/>
            <person name="Cleveland D.W."/>
        </authorList>
    </citation>
    <scope>IDENTIFICATION IN THE CENPA-NAC COMPLEX WITH CENPA; CENPC; CENPH; CENPN; CENPT AND CENPU</scope>
</reference>
<reference key="11">
    <citation type="journal article" date="2011" name="BMC Syst. Biol.">
        <title>Initial characterization of the human central proteome.</title>
        <authorList>
            <person name="Burkard T.R."/>
            <person name="Planyavsky M."/>
            <person name="Kaupe I."/>
            <person name="Breitwieser F.P."/>
            <person name="Buerckstuemmer T."/>
            <person name="Bennett K.L."/>
            <person name="Superti-Furga G."/>
            <person name="Colinge J."/>
        </authorList>
    </citation>
    <scope>IDENTIFICATION BY MASS SPECTROMETRY [LARGE SCALE ANALYSIS]</scope>
</reference>